<keyword id="KW-0004">4Fe-4S</keyword>
<keyword id="KW-0408">Iron</keyword>
<keyword id="KW-0411">Iron-sulfur</keyword>
<keyword id="KW-0479">Metal-binding</keyword>
<keyword id="KW-1185">Reference proteome</keyword>
<organism>
    <name type="scientific">Shewanella frigidimarina (strain NCIMB 400)</name>
    <dbReference type="NCBI Taxonomy" id="318167"/>
    <lineage>
        <taxon>Bacteria</taxon>
        <taxon>Pseudomonadati</taxon>
        <taxon>Pseudomonadota</taxon>
        <taxon>Gammaproteobacteria</taxon>
        <taxon>Alteromonadales</taxon>
        <taxon>Shewanellaceae</taxon>
        <taxon>Shewanella</taxon>
    </lineage>
</organism>
<accession>Q089F8</accession>
<evidence type="ECO:0000255" key="1">
    <source>
        <dbReference type="HAMAP-Rule" id="MF_01637"/>
    </source>
</evidence>
<gene>
    <name evidence="1" type="primary">nfuA</name>
    <name type="ordered locus">Sfri_0244</name>
</gene>
<protein>
    <recommendedName>
        <fullName evidence="1">Fe/S biogenesis protein NfuA</fullName>
    </recommendedName>
</protein>
<dbReference type="EMBL" id="CP000447">
    <property type="protein sequence ID" value="ABI70107.1"/>
    <property type="molecule type" value="Genomic_DNA"/>
</dbReference>
<dbReference type="RefSeq" id="WP_011635734.1">
    <property type="nucleotide sequence ID" value="NC_008345.1"/>
</dbReference>
<dbReference type="SMR" id="Q089F8"/>
<dbReference type="STRING" id="318167.Sfri_0244"/>
<dbReference type="KEGG" id="sfr:Sfri_0244"/>
<dbReference type="eggNOG" id="COG0316">
    <property type="taxonomic scope" value="Bacteria"/>
</dbReference>
<dbReference type="eggNOG" id="COG0694">
    <property type="taxonomic scope" value="Bacteria"/>
</dbReference>
<dbReference type="HOGENOM" id="CLU_094569_0_0_6"/>
<dbReference type="OrthoDB" id="9785450at2"/>
<dbReference type="Proteomes" id="UP000000684">
    <property type="component" value="Chromosome"/>
</dbReference>
<dbReference type="GO" id="GO:0051539">
    <property type="term" value="F:4 iron, 4 sulfur cluster binding"/>
    <property type="evidence" value="ECO:0007669"/>
    <property type="project" value="UniProtKB-UniRule"/>
</dbReference>
<dbReference type="GO" id="GO:0005506">
    <property type="term" value="F:iron ion binding"/>
    <property type="evidence" value="ECO:0007669"/>
    <property type="project" value="InterPro"/>
</dbReference>
<dbReference type="GO" id="GO:0016226">
    <property type="term" value="P:iron-sulfur cluster assembly"/>
    <property type="evidence" value="ECO:0007669"/>
    <property type="project" value="UniProtKB-UniRule"/>
</dbReference>
<dbReference type="GO" id="GO:0051604">
    <property type="term" value="P:protein maturation"/>
    <property type="evidence" value="ECO:0007669"/>
    <property type="project" value="UniProtKB-UniRule"/>
</dbReference>
<dbReference type="Gene3D" id="3.30.300.130">
    <property type="entry name" value="Fe-S cluster assembly (FSCA)"/>
    <property type="match status" value="1"/>
</dbReference>
<dbReference type="Gene3D" id="2.60.300.12">
    <property type="entry name" value="HesB-like domain"/>
    <property type="match status" value="1"/>
</dbReference>
<dbReference type="HAMAP" id="MF_01637">
    <property type="entry name" value="Fe_S_biogen_NfuA"/>
    <property type="match status" value="1"/>
</dbReference>
<dbReference type="InterPro" id="IPR017726">
    <property type="entry name" value="Fe/S_biogenesis_protein_NfuA"/>
</dbReference>
<dbReference type="InterPro" id="IPR000361">
    <property type="entry name" value="FeS_biogenesis"/>
</dbReference>
<dbReference type="InterPro" id="IPR034904">
    <property type="entry name" value="FSCA_dom_sf"/>
</dbReference>
<dbReference type="InterPro" id="IPR035903">
    <property type="entry name" value="HesB-like_dom_sf"/>
</dbReference>
<dbReference type="InterPro" id="IPR001075">
    <property type="entry name" value="NIF_FeS_clus_asmbl_NifU_C"/>
</dbReference>
<dbReference type="NCBIfam" id="NF008392">
    <property type="entry name" value="PRK11190.1"/>
    <property type="match status" value="1"/>
</dbReference>
<dbReference type="NCBIfam" id="TIGR03341">
    <property type="entry name" value="YhgI_GntY"/>
    <property type="match status" value="1"/>
</dbReference>
<dbReference type="PANTHER" id="PTHR11178:SF51">
    <property type="entry name" value="FE_S BIOGENESIS PROTEIN NFUA"/>
    <property type="match status" value="1"/>
</dbReference>
<dbReference type="PANTHER" id="PTHR11178">
    <property type="entry name" value="IRON-SULFUR CLUSTER SCAFFOLD PROTEIN NFU-RELATED"/>
    <property type="match status" value="1"/>
</dbReference>
<dbReference type="Pfam" id="PF01521">
    <property type="entry name" value="Fe-S_biosyn"/>
    <property type="match status" value="1"/>
</dbReference>
<dbReference type="Pfam" id="PF01106">
    <property type="entry name" value="NifU"/>
    <property type="match status" value="1"/>
</dbReference>
<dbReference type="SUPFAM" id="SSF117916">
    <property type="entry name" value="Fe-S cluster assembly (FSCA) domain-like"/>
    <property type="match status" value="1"/>
</dbReference>
<dbReference type="SUPFAM" id="SSF89360">
    <property type="entry name" value="HesB-like domain"/>
    <property type="match status" value="1"/>
</dbReference>
<name>NFUA_SHEFN</name>
<reference key="1">
    <citation type="submission" date="2006-08" db="EMBL/GenBank/DDBJ databases">
        <title>Complete sequence of Shewanella frigidimarina NCIMB 400.</title>
        <authorList>
            <consortium name="US DOE Joint Genome Institute"/>
            <person name="Copeland A."/>
            <person name="Lucas S."/>
            <person name="Lapidus A."/>
            <person name="Barry K."/>
            <person name="Detter J.C."/>
            <person name="Glavina del Rio T."/>
            <person name="Hammon N."/>
            <person name="Israni S."/>
            <person name="Dalin E."/>
            <person name="Tice H."/>
            <person name="Pitluck S."/>
            <person name="Fredrickson J.K."/>
            <person name="Kolker E."/>
            <person name="McCuel L.A."/>
            <person name="DiChristina T."/>
            <person name="Nealson K.H."/>
            <person name="Newman D."/>
            <person name="Tiedje J.M."/>
            <person name="Zhou J."/>
            <person name="Romine M.F."/>
            <person name="Culley D.E."/>
            <person name="Serres M."/>
            <person name="Chertkov O."/>
            <person name="Brettin T."/>
            <person name="Bruce D."/>
            <person name="Han C."/>
            <person name="Tapia R."/>
            <person name="Gilna P."/>
            <person name="Schmutz J."/>
            <person name="Larimer F."/>
            <person name="Land M."/>
            <person name="Hauser L."/>
            <person name="Kyrpides N."/>
            <person name="Mikhailova N."/>
            <person name="Richardson P."/>
        </authorList>
    </citation>
    <scope>NUCLEOTIDE SEQUENCE [LARGE SCALE GENOMIC DNA]</scope>
    <source>
        <strain>NCIMB 400</strain>
    </source>
</reference>
<sequence>MITISDTAQAHFVKLLADQPEGTHIRVFVISPGTAQAECGVSYCPPDAAEADDVELPFNGFSAMVDEKSAPFLDDASIDFVTDQLGSQLTLKAPNAKMRKVSGDAPLVERIEYIIQSEINPQLASHGGNIMLVEITEAGVAVLQFGGGCNGCSQVDITLKDGIEKQLLDMFPTELTGVRDVTEHEHGEHSYA</sequence>
<feature type="chain" id="PRO_0000268240" description="Fe/S biogenesis protein NfuA">
    <location>
        <begin position="1"/>
        <end position="192"/>
    </location>
</feature>
<feature type="binding site" evidence="1">
    <location>
        <position position="149"/>
    </location>
    <ligand>
        <name>[4Fe-4S] cluster</name>
        <dbReference type="ChEBI" id="CHEBI:49883"/>
    </ligand>
</feature>
<feature type="binding site" evidence="1">
    <location>
        <position position="152"/>
    </location>
    <ligand>
        <name>[4Fe-4S] cluster</name>
        <dbReference type="ChEBI" id="CHEBI:49883"/>
    </ligand>
</feature>
<proteinExistence type="inferred from homology"/>
<comment type="function">
    <text evidence="1">Involved in iron-sulfur cluster biogenesis. Binds a 4Fe-4S cluster, can transfer this cluster to apoproteins, and thereby intervenes in the maturation of Fe/S proteins. Could also act as a scaffold/chaperone for damaged Fe/S proteins.</text>
</comment>
<comment type="cofactor">
    <cofactor evidence="1">
        <name>[4Fe-4S] cluster</name>
        <dbReference type="ChEBI" id="CHEBI:49883"/>
    </cofactor>
    <text evidence="1">Binds 1 [4Fe-4S] cluster per subunit. The cluster is presumably bound at the interface of two monomers.</text>
</comment>
<comment type="subunit">
    <text evidence="1">Homodimer.</text>
</comment>
<comment type="similarity">
    <text evidence="1">Belongs to the NfuA family.</text>
</comment>